<feature type="chain" id="PRO_0000153287" description="Interferon-related developmental regulator 1">
    <location>
        <begin position="1"/>
        <end position="450"/>
    </location>
</feature>
<feature type="region of interest" description="Disordered" evidence="2">
    <location>
        <begin position="1"/>
        <end position="46"/>
    </location>
</feature>
<feature type="compositionally biased region" description="Basic residues" evidence="2">
    <location>
        <begin position="1"/>
        <end position="10"/>
    </location>
</feature>
<feature type="compositionally biased region" description="Low complexity" evidence="2">
    <location>
        <begin position="22"/>
        <end position="32"/>
    </location>
</feature>
<organism>
    <name type="scientific">Sus scrofa</name>
    <name type="common">Pig</name>
    <dbReference type="NCBI Taxonomy" id="9823"/>
    <lineage>
        <taxon>Eukaryota</taxon>
        <taxon>Metazoa</taxon>
        <taxon>Chordata</taxon>
        <taxon>Craniata</taxon>
        <taxon>Vertebrata</taxon>
        <taxon>Euteleostomi</taxon>
        <taxon>Mammalia</taxon>
        <taxon>Eutheria</taxon>
        <taxon>Laurasiatheria</taxon>
        <taxon>Artiodactyla</taxon>
        <taxon>Suina</taxon>
        <taxon>Suidae</taxon>
        <taxon>Sus</taxon>
    </lineage>
</organism>
<accession>Q5S1U6</accession>
<sequence length="450" mass="50123">MPKNKKRNTPHRGGSGGGGSGAAATTAATAGGQHRNVQPFSDEDASIETMSHCSGYSDPSSFAEDGPEVLDEEGTQEDLEYKLKGLIDLTLDKSAKTRQAALEGIKNALASRMLYEFILERRMTLTDSIERCLKKGKSDEQRAAAALASVLCIQLGPGIESEEVLKTLGPVLKKIICDGTASIQARQTCATCFGVCCFIATDDITELYSTLQCLENIFTKSYLKEKDSNVICSTPNTALHISSLLAWTLLLTICPLSEVKKKLEMHVHKLPSLLSSDDVNMRIAAGESLALLFELARGMESDFFYEDMESLTQMLRALATDGNKHRAKVDKRKQRSVFRDILRAVEERDFPTETVKFGPERMYIDCWVKKRTYDTFKEILGSGMQYHLQSNEFLRNVFELGPPVMLDAATLKTMKISRFERHLYNSAAFKARTKARSKCRDKRADVGEFF</sequence>
<comment type="function">
    <text evidence="1">Could play a role in regulating gene activity in the proliferative and/or differentiative pathways induced by NGF. May be an autocrine factor that attenuates or amplifies the initial ligand-induced signal (By similarity).</text>
</comment>
<comment type="subunit">
    <text evidence="1">Interacts with PSIP1/LEDGF.</text>
</comment>
<comment type="similarity">
    <text evidence="3">Belongs to the IFRD family.</text>
</comment>
<reference key="1">
    <citation type="submission" date="2004-10" db="EMBL/GenBank/DDBJ databases">
        <title>Isolation, cloning and characterization of porcine IFRD1.</title>
        <authorList>
            <person name="Wang T."/>
            <person name="Xiong Y.Z."/>
        </authorList>
    </citation>
    <scope>NUCLEOTIDE SEQUENCE [MRNA]</scope>
    <source>
        <tissue>Muscle</tissue>
    </source>
</reference>
<protein>
    <recommendedName>
        <fullName>Interferon-related developmental regulator 1</fullName>
    </recommendedName>
</protein>
<name>IFRD1_PIG</name>
<gene>
    <name type="primary">IFRD1</name>
</gene>
<proteinExistence type="evidence at transcript level"/>
<keyword id="KW-0217">Developmental protein</keyword>
<keyword id="KW-0221">Differentiation</keyword>
<keyword id="KW-1185">Reference proteome</keyword>
<evidence type="ECO:0000250" key="1"/>
<evidence type="ECO:0000256" key="2">
    <source>
        <dbReference type="SAM" id="MobiDB-lite"/>
    </source>
</evidence>
<evidence type="ECO:0000305" key="3"/>
<dbReference type="EMBL" id="AY789133">
    <property type="protein sequence ID" value="AAV58829.1"/>
    <property type="molecule type" value="mRNA"/>
</dbReference>
<dbReference type="RefSeq" id="NP_001007520.1">
    <property type="nucleotide sequence ID" value="NM_001007519.1"/>
</dbReference>
<dbReference type="SMR" id="Q5S1U6"/>
<dbReference type="FunCoup" id="Q5S1U6">
    <property type="interactions" value="1305"/>
</dbReference>
<dbReference type="STRING" id="9823.ENSSSCP00000017634"/>
<dbReference type="PaxDb" id="9823-ENSSSCP00000017634"/>
<dbReference type="Ensembl" id="ENSSSCT00000018124.5">
    <property type="protein sequence ID" value="ENSSSCP00000017634.5"/>
    <property type="gene ID" value="ENSSSCG00000016646.5"/>
</dbReference>
<dbReference type="Ensembl" id="ENSSSCT00015001148.1">
    <property type="protein sequence ID" value="ENSSSCP00015000287.1"/>
    <property type="gene ID" value="ENSSSCG00015000899.1"/>
</dbReference>
<dbReference type="Ensembl" id="ENSSSCT00030080629.1">
    <property type="protein sequence ID" value="ENSSSCP00030036963.1"/>
    <property type="gene ID" value="ENSSSCG00030057691.1"/>
</dbReference>
<dbReference type="Ensembl" id="ENSSSCT00040054786.1">
    <property type="protein sequence ID" value="ENSSSCP00040022784.1"/>
    <property type="gene ID" value="ENSSSCG00040039611.1"/>
</dbReference>
<dbReference type="Ensembl" id="ENSSSCT00060017456.1">
    <property type="protein sequence ID" value="ENSSSCP00060006952.1"/>
    <property type="gene ID" value="ENSSSCG00060013262.1"/>
</dbReference>
<dbReference type="Ensembl" id="ENSSSCT00070057725.1">
    <property type="protein sequence ID" value="ENSSSCP00070049072.1"/>
    <property type="gene ID" value="ENSSSCG00070028773.1"/>
</dbReference>
<dbReference type="Ensembl" id="ENSSSCT00085002095">
    <property type="protein sequence ID" value="ENSSSCP00085001535"/>
    <property type="gene ID" value="ENSSSCG00085001406"/>
</dbReference>
<dbReference type="Ensembl" id="ENSSSCT00105011566">
    <property type="protein sequence ID" value="ENSSSCP00105008515"/>
    <property type="gene ID" value="ENSSSCG00105005667"/>
</dbReference>
<dbReference type="Ensembl" id="ENSSSCT00130009934">
    <property type="protein sequence ID" value="ENSSSCP00130006604"/>
    <property type="gene ID" value="ENSSSCG00130005317"/>
</dbReference>
<dbReference type="GeneID" id="493185"/>
<dbReference type="KEGG" id="ssc:493185"/>
<dbReference type="CTD" id="3475"/>
<dbReference type="eggNOG" id="KOG2842">
    <property type="taxonomic scope" value="Eukaryota"/>
</dbReference>
<dbReference type="GeneTree" id="ENSGT00390000013347"/>
<dbReference type="HOGENOM" id="CLU_031384_1_0_1"/>
<dbReference type="InParanoid" id="Q5S1U6"/>
<dbReference type="OrthoDB" id="686784at2759"/>
<dbReference type="TreeFam" id="TF313638"/>
<dbReference type="Proteomes" id="UP000008227">
    <property type="component" value="Chromosome 18"/>
</dbReference>
<dbReference type="Proteomes" id="UP000314985">
    <property type="component" value="Chromosome 18"/>
</dbReference>
<dbReference type="Proteomes" id="UP000694570">
    <property type="component" value="Unplaced"/>
</dbReference>
<dbReference type="Proteomes" id="UP000694571">
    <property type="component" value="Unplaced"/>
</dbReference>
<dbReference type="Proteomes" id="UP000694720">
    <property type="component" value="Unplaced"/>
</dbReference>
<dbReference type="Proteomes" id="UP000694722">
    <property type="component" value="Unplaced"/>
</dbReference>
<dbReference type="Proteomes" id="UP000694723">
    <property type="component" value="Unplaced"/>
</dbReference>
<dbReference type="Proteomes" id="UP000694724">
    <property type="component" value="Unplaced"/>
</dbReference>
<dbReference type="Proteomes" id="UP000694725">
    <property type="component" value="Unplaced"/>
</dbReference>
<dbReference type="Proteomes" id="UP000694726">
    <property type="component" value="Unplaced"/>
</dbReference>
<dbReference type="Proteomes" id="UP000694727">
    <property type="component" value="Unplaced"/>
</dbReference>
<dbReference type="Proteomes" id="UP000694728">
    <property type="component" value="Unplaced"/>
</dbReference>
<dbReference type="GO" id="GO:0030154">
    <property type="term" value="P:cell differentiation"/>
    <property type="evidence" value="ECO:0007669"/>
    <property type="project" value="UniProtKB-KW"/>
</dbReference>
<dbReference type="FunFam" id="1.25.10.10:FF:000259">
    <property type="entry name" value="interferon-related developmental regulator 1"/>
    <property type="match status" value="1"/>
</dbReference>
<dbReference type="Gene3D" id="1.25.10.10">
    <property type="entry name" value="Leucine-rich Repeat Variant"/>
    <property type="match status" value="1"/>
</dbReference>
<dbReference type="InterPro" id="IPR011989">
    <property type="entry name" value="ARM-like"/>
</dbReference>
<dbReference type="InterPro" id="IPR016024">
    <property type="entry name" value="ARM-type_fold"/>
</dbReference>
<dbReference type="InterPro" id="IPR039777">
    <property type="entry name" value="IFRD"/>
</dbReference>
<dbReference type="InterPro" id="IPR006921">
    <property type="entry name" value="Interferon-rel_develop_reg_C"/>
</dbReference>
<dbReference type="InterPro" id="IPR007701">
    <property type="entry name" value="Interferon-rel_develop_reg_N"/>
</dbReference>
<dbReference type="PANTHER" id="PTHR12354">
    <property type="entry name" value="INTERFERON-RELATED DEVELOPMENTAL REGULATOR"/>
    <property type="match status" value="1"/>
</dbReference>
<dbReference type="PANTHER" id="PTHR12354:SF6">
    <property type="entry name" value="INTERFERON-RELATED DEVELOPMENTAL REGULATOR 1"/>
    <property type="match status" value="1"/>
</dbReference>
<dbReference type="Pfam" id="PF05004">
    <property type="entry name" value="IFRD"/>
    <property type="match status" value="1"/>
</dbReference>
<dbReference type="Pfam" id="PF04836">
    <property type="entry name" value="IFRD_C"/>
    <property type="match status" value="1"/>
</dbReference>
<dbReference type="SUPFAM" id="SSF48371">
    <property type="entry name" value="ARM repeat"/>
    <property type="match status" value="1"/>
</dbReference>